<protein>
    <recommendedName>
        <fullName>ATP-dependent RNA helicase sub2</fullName>
        <ecNumber>3.6.4.13</ecNumber>
    </recommendedName>
</protein>
<name>SUB2_SCLS1</name>
<gene>
    <name type="primary">sub2</name>
    <name type="ORF">SS1G_05270</name>
</gene>
<accession>A7EIX7</accession>
<evidence type="ECO:0000250" key="1"/>
<evidence type="ECO:0000255" key="2">
    <source>
        <dbReference type="PROSITE-ProRule" id="PRU00541"/>
    </source>
</evidence>
<evidence type="ECO:0000255" key="3">
    <source>
        <dbReference type="PROSITE-ProRule" id="PRU00542"/>
    </source>
</evidence>
<evidence type="ECO:0000305" key="4"/>
<sequence length="444" mass="49655">MSAAEEDLIDYSDEELATTEAPAPAAGANGGVKGDSGNLTVSGNAAAAKKGSYVGIHSTGFREFLLKPELLRAISWCGFEHPSEVQQVCIPQAILGTDVLCQAKSGLGKTAVFVLTTLQQVEVVAGETSVLVMCHTRELAYQIRNEYQRFCHFMPDVKIGVFYGGVPISKDVEVLKNPETHPHIIVGTPGRLNALVRDKYLRLNSVKVFVLDECDKMLDQIDMRRDVQEIFRATPPQKQVMMFSATLSQEVRPICKKFMQNPLEIYIDNETKLTLYGLQQYYIKLEEREKNRRLNELLDELSFNQVIIFVKSTVRATELDKLLRECNFPSVAIHSGVSQEERIKRFNDFKDFNKRICVATDVFGRGIDVNKINLAINYDLPPDADSYLHRVGRAGRFGTKGLAISFVSNEADQEVLKAVEKRFEVALPEYPEGGVDSAAYTKTD</sequence>
<comment type="function">
    <text evidence="1">ATP-binding RNA helicase involved in transcription elongation and required for the export of mRNA out of the nucleus. SUB2 also plays a role in pre-mRNA splicing and spliceosome assembly. May be involved in rDNA and telomeric silencing, and maintenance of genome integrity (By similarity).</text>
</comment>
<comment type="catalytic activity">
    <reaction>
        <text>ATP + H2O = ADP + phosphate + H(+)</text>
        <dbReference type="Rhea" id="RHEA:13065"/>
        <dbReference type="ChEBI" id="CHEBI:15377"/>
        <dbReference type="ChEBI" id="CHEBI:15378"/>
        <dbReference type="ChEBI" id="CHEBI:30616"/>
        <dbReference type="ChEBI" id="CHEBI:43474"/>
        <dbReference type="ChEBI" id="CHEBI:456216"/>
        <dbReference type="EC" id="3.6.4.13"/>
    </reaction>
</comment>
<comment type="subcellular location">
    <subcellularLocation>
        <location evidence="1">Nucleus</location>
    </subcellularLocation>
</comment>
<comment type="domain">
    <text>The Q motif is unique to and characteristic of the DEAD box family of RNA helicases and controls ATP binding and hydrolysis.</text>
</comment>
<comment type="similarity">
    <text evidence="4">Belongs to the DEAD box helicase family. DECD subfamily.</text>
</comment>
<proteinExistence type="inferred from homology"/>
<keyword id="KW-0067">ATP-binding</keyword>
<keyword id="KW-0347">Helicase</keyword>
<keyword id="KW-0378">Hydrolase</keyword>
<keyword id="KW-0507">mRNA processing</keyword>
<keyword id="KW-0508">mRNA splicing</keyword>
<keyword id="KW-0509">mRNA transport</keyword>
<keyword id="KW-0547">Nucleotide-binding</keyword>
<keyword id="KW-0539">Nucleus</keyword>
<keyword id="KW-1185">Reference proteome</keyword>
<keyword id="KW-0694">RNA-binding</keyword>
<keyword id="KW-0747">Spliceosome</keyword>
<keyword id="KW-0813">Transport</keyword>
<feature type="chain" id="PRO_0000310222" description="ATP-dependent RNA helicase sub2">
    <location>
        <begin position="1"/>
        <end position="444"/>
    </location>
</feature>
<feature type="domain" description="Helicase ATP-binding" evidence="2">
    <location>
        <begin position="90"/>
        <end position="265"/>
    </location>
</feature>
<feature type="domain" description="Helicase C-terminal" evidence="3">
    <location>
        <begin position="277"/>
        <end position="438"/>
    </location>
</feature>
<feature type="short sequence motif" description="Q motif">
    <location>
        <begin position="59"/>
        <end position="87"/>
    </location>
</feature>
<feature type="short sequence motif" description="DECD box">
    <location>
        <begin position="212"/>
        <end position="215"/>
    </location>
</feature>
<feature type="binding site" evidence="2">
    <location>
        <begin position="103"/>
        <end position="110"/>
    </location>
    <ligand>
        <name>ATP</name>
        <dbReference type="ChEBI" id="CHEBI:30616"/>
    </ligand>
</feature>
<dbReference type="EC" id="3.6.4.13"/>
<dbReference type="EMBL" id="CH476626">
    <property type="protein sequence ID" value="EDO02793.1"/>
    <property type="molecule type" value="Genomic_DNA"/>
</dbReference>
<dbReference type="RefSeq" id="XP_001593842.1">
    <property type="nucleotide sequence ID" value="XM_001593792.1"/>
</dbReference>
<dbReference type="SMR" id="A7EIX7"/>
<dbReference type="FunCoup" id="A7EIX7">
    <property type="interactions" value="1163"/>
</dbReference>
<dbReference type="STRING" id="665079.A7EIX7"/>
<dbReference type="EnsemblFungi" id="EDO02793">
    <property type="protein sequence ID" value="EDO02793"/>
    <property type="gene ID" value="SS1G_05270"/>
</dbReference>
<dbReference type="GeneID" id="5490006"/>
<dbReference type="KEGG" id="ssl:SS1G_05270"/>
<dbReference type="VEuPathDB" id="FungiDB:sscle_08g065440"/>
<dbReference type="eggNOG" id="KOG0329">
    <property type="taxonomic scope" value="Eukaryota"/>
</dbReference>
<dbReference type="HOGENOM" id="CLU_003041_1_0_1"/>
<dbReference type="InParanoid" id="A7EIX7"/>
<dbReference type="OMA" id="YAHVEPK"/>
<dbReference type="OrthoDB" id="10265785at2759"/>
<dbReference type="Proteomes" id="UP000001312">
    <property type="component" value="Unassembled WGS sequence"/>
</dbReference>
<dbReference type="GO" id="GO:0000781">
    <property type="term" value="C:chromosome, telomeric region"/>
    <property type="evidence" value="ECO:0007669"/>
    <property type="project" value="EnsemblFungi"/>
</dbReference>
<dbReference type="GO" id="GO:0005681">
    <property type="term" value="C:spliceosomal complex"/>
    <property type="evidence" value="ECO:0007669"/>
    <property type="project" value="UniProtKB-KW"/>
</dbReference>
<dbReference type="GO" id="GO:0000346">
    <property type="term" value="C:transcription export complex"/>
    <property type="evidence" value="ECO:0007669"/>
    <property type="project" value="EnsemblFungi"/>
</dbReference>
<dbReference type="GO" id="GO:0005524">
    <property type="term" value="F:ATP binding"/>
    <property type="evidence" value="ECO:0007669"/>
    <property type="project" value="UniProtKB-KW"/>
</dbReference>
<dbReference type="GO" id="GO:0016887">
    <property type="term" value="F:ATP hydrolysis activity"/>
    <property type="evidence" value="ECO:0007669"/>
    <property type="project" value="RHEA"/>
</dbReference>
<dbReference type="GO" id="GO:0003729">
    <property type="term" value="F:mRNA binding"/>
    <property type="evidence" value="ECO:0000318"/>
    <property type="project" value="GO_Central"/>
</dbReference>
<dbReference type="GO" id="GO:0003724">
    <property type="term" value="F:RNA helicase activity"/>
    <property type="evidence" value="ECO:0000318"/>
    <property type="project" value="GO_Central"/>
</dbReference>
<dbReference type="GO" id="GO:0031124">
    <property type="term" value="P:mRNA 3'-end processing"/>
    <property type="evidence" value="ECO:0007669"/>
    <property type="project" value="EnsemblFungi"/>
</dbReference>
<dbReference type="GO" id="GO:0006406">
    <property type="term" value="P:mRNA export from nucleus"/>
    <property type="evidence" value="ECO:0000318"/>
    <property type="project" value="GO_Central"/>
</dbReference>
<dbReference type="GO" id="GO:0000398">
    <property type="term" value="P:mRNA splicing, via spliceosome"/>
    <property type="evidence" value="ECO:0000318"/>
    <property type="project" value="GO_Central"/>
</dbReference>
<dbReference type="GO" id="GO:0031509">
    <property type="term" value="P:subtelomeric heterochromatin formation"/>
    <property type="evidence" value="ECO:0007669"/>
    <property type="project" value="EnsemblFungi"/>
</dbReference>
<dbReference type="GO" id="GO:0006368">
    <property type="term" value="P:transcription elongation by RNA polymerase II"/>
    <property type="evidence" value="ECO:0007669"/>
    <property type="project" value="EnsemblFungi"/>
</dbReference>
<dbReference type="GO" id="GO:0006283">
    <property type="term" value="P:transcription-coupled nucleotide-excision repair"/>
    <property type="evidence" value="ECO:0007669"/>
    <property type="project" value="EnsemblFungi"/>
</dbReference>
<dbReference type="CDD" id="cd17950">
    <property type="entry name" value="DEADc_DDX39"/>
    <property type="match status" value="1"/>
</dbReference>
<dbReference type="CDD" id="cd18787">
    <property type="entry name" value="SF2_C_DEAD"/>
    <property type="match status" value="1"/>
</dbReference>
<dbReference type="FunFam" id="3.40.50.300:FF:000111">
    <property type="entry name" value="DEAD-box ATP-dependent RNA helicase"/>
    <property type="match status" value="1"/>
</dbReference>
<dbReference type="FunFam" id="3.40.50.300:FF:000168">
    <property type="entry name" value="DEAD-box ATP-dependent RNA helicase 56-like"/>
    <property type="match status" value="1"/>
</dbReference>
<dbReference type="Gene3D" id="3.40.50.300">
    <property type="entry name" value="P-loop containing nucleotide triphosphate hydrolases"/>
    <property type="match status" value="2"/>
</dbReference>
<dbReference type="InterPro" id="IPR011545">
    <property type="entry name" value="DEAD/DEAH_box_helicase_dom"/>
</dbReference>
<dbReference type="InterPro" id="IPR014001">
    <property type="entry name" value="Helicase_ATP-bd"/>
</dbReference>
<dbReference type="InterPro" id="IPR001650">
    <property type="entry name" value="Helicase_C-like"/>
</dbReference>
<dbReference type="InterPro" id="IPR027417">
    <property type="entry name" value="P-loop_NTPase"/>
</dbReference>
<dbReference type="InterPro" id="IPR014014">
    <property type="entry name" value="RNA_helicase_DEAD_Q_motif"/>
</dbReference>
<dbReference type="PANTHER" id="PTHR47958">
    <property type="entry name" value="ATP-DEPENDENT RNA HELICASE DBP3"/>
    <property type="match status" value="1"/>
</dbReference>
<dbReference type="Pfam" id="PF00270">
    <property type="entry name" value="DEAD"/>
    <property type="match status" value="1"/>
</dbReference>
<dbReference type="Pfam" id="PF00271">
    <property type="entry name" value="Helicase_C"/>
    <property type="match status" value="1"/>
</dbReference>
<dbReference type="SMART" id="SM00487">
    <property type="entry name" value="DEXDc"/>
    <property type="match status" value="1"/>
</dbReference>
<dbReference type="SMART" id="SM00490">
    <property type="entry name" value="HELICc"/>
    <property type="match status" value="1"/>
</dbReference>
<dbReference type="SUPFAM" id="SSF52540">
    <property type="entry name" value="P-loop containing nucleoside triphosphate hydrolases"/>
    <property type="match status" value="1"/>
</dbReference>
<dbReference type="PROSITE" id="PS51192">
    <property type="entry name" value="HELICASE_ATP_BIND_1"/>
    <property type="match status" value="1"/>
</dbReference>
<dbReference type="PROSITE" id="PS51194">
    <property type="entry name" value="HELICASE_CTER"/>
    <property type="match status" value="1"/>
</dbReference>
<dbReference type="PROSITE" id="PS51195">
    <property type="entry name" value="Q_MOTIF"/>
    <property type="match status" value="1"/>
</dbReference>
<organism>
    <name type="scientific">Sclerotinia sclerotiorum (strain ATCC 18683 / 1980 / Ss-1)</name>
    <name type="common">White mold</name>
    <name type="synonym">Whetzelinia sclerotiorum</name>
    <dbReference type="NCBI Taxonomy" id="665079"/>
    <lineage>
        <taxon>Eukaryota</taxon>
        <taxon>Fungi</taxon>
        <taxon>Dikarya</taxon>
        <taxon>Ascomycota</taxon>
        <taxon>Pezizomycotina</taxon>
        <taxon>Leotiomycetes</taxon>
        <taxon>Helotiales</taxon>
        <taxon>Sclerotiniaceae</taxon>
        <taxon>Sclerotinia</taxon>
    </lineage>
</organism>
<reference key="1">
    <citation type="journal article" date="2011" name="PLoS Genet.">
        <title>Genomic analysis of the necrotrophic fungal pathogens Sclerotinia sclerotiorum and Botrytis cinerea.</title>
        <authorList>
            <person name="Amselem J."/>
            <person name="Cuomo C.A."/>
            <person name="van Kan J.A.L."/>
            <person name="Viaud M."/>
            <person name="Benito E.P."/>
            <person name="Couloux A."/>
            <person name="Coutinho P.M."/>
            <person name="de Vries R.P."/>
            <person name="Dyer P.S."/>
            <person name="Fillinger S."/>
            <person name="Fournier E."/>
            <person name="Gout L."/>
            <person name="Hahn M."/>
            <person name="Kohn L."/>
            <person name="Lapalu N."/>
            <person name="Plummer K.M."/>
            <person name="Pradier J.-M."/>
            <person name="Quevillon E."/>
            <person name="Sharon A."/>
            <person name="Simon A."/>
            <person name="ten Have A."/>
            <person name="Tudzynski B."/>
            <person name="Tudzynski P."/>
            <person name="Wincker P."/>
            <person name="Andrew M."/>
            <person name="Anthouard V."/>
            <person name="Beever R.E."/>
            <person name="Beffa R."/>
            <person name="Benoit I."/>
            <person name="Bouzid O."/>
            <person name="Brault B."/>
            <person name="Chen Z."/>
            <person name="Choquer M."/>
            <person name="Collemare J."/>
            <person name="Cotton P."/>
            <person name="Danchin E.G."/>
            <person name="Da Silva C."/>
            <person name="Gautier A."/>
            <person name="Giraud C."/>
            <person name="Giraud T."/>
            <person name="Gonzalez C."/>
            <person name="Grossetete S."/>
            <person name="Gueldener U."/>
            <person name="Henrissat B."/>
            <person name="Howlett B.J."/>
            <person name="Kodira C."/>
            <person name="Kretschmer M."/>
            <person name="Lappartient A."/>
            <person name="Leroch M."/>
            <person name="Levis C."/>
            <person name="Mauceli E."/>
            <person name="Neuveglise C."/>
            <person name="Oeser B."/>
            <person name="Pearson M."/>
            <person name="Poulain J."/>
            <person name="Poussereau N."/>
            <person name="Quesneville H."/>
            <person name="Rascle C."/>
            <person name="Schumacher J."/>
            <person name="Segurens B."/>
            <person name="Sexton A."/>
            <person name="Silva E."/>
            <person name="Sirven C."/>
            <person name="Soanes D.M."/>
            <person name="Talbot N.J."/>
            <person name="Templeton M."/>
            <person name="Yandava C."/>
            <person name="Yarden O."/>
            <person name="Zeng Q."/>
            <person name="Rollins J.A."/>
            <person name="Lebrun M.-H."/>
            <person name="Dickman M."/>
        </authorList>
    </citation>
    <scope>NUCLEOTIDE SEQUENCE [LARGE SCALE GENOMIC DNA]</scope>
    <source>
        <strain>ATCC 18683 / 1980 / Ss-1</strain>
    </source>
</reference>